<proteinExistence type="inferred from homology"/>
<sequence length="362" mass="41315">MVRALIRRVLGRQENDQSTPQLELPPTDSRDRARSMVMGLQDEICAGLEALDGEGRFQEESWVRPEGGGGRSRVMREGRVFEQGGVNFSEVQGNELPPSILKQRPEAKGHPWFATGTSMVLHPRNPYIPTVHLNYRYFEAGPVWWFGGGADLTPYYPFLDDARHFHRTHQQACNSVHPNLHKVFKPWCDEYFYLKHRNETRGVGGIFYDYQDSRGTLYKGQDPTGAAAKVSSELGATPLSWEQLFSLGQANGRAFLPSYAPIVEKRHATSYGDRERDFQLYRRGRYVEFNLVWDRGTIFGLQTNGRTESILMSLPPLVRWEYGYTAEAGSREALLTDLFTTPQDWLGDPSLEERCRPHQAIN</sequence>
<dbReference type="EC" id="1.3.3.3" evidence="1"/>
<dbReference type="EMBL" id="CP000097">
    <property type="protein sequence ID" value="ABB26883.1"/>
    <property type="molecule type" value="Genomic_DNA"/>
</dbReference>
<dbReference type="RefSeq" id="WP_011360685.1">
    <property type="nucleotide sequence ID" value="NC_007513.1"/>
</dbReference>
<dbReference type="SMR" id="Q3AWA8"/>
<dbReference type="STRING" id="316279.Syncc9902_1926"/>
<dbReference type="KEGG" id="sye:Syncc9902_1926"/>
<dbReference type="eggNOG" id="COG0408">
    <property type="taxonomic scope" value="Bacteria"/>
</dbReference>
<dbReference type="HOGENOM" id="CLU_026169_0_1_3"/>
<dbReference type="OrthoDB" id="9777553at2"/>
<dbReference type="UniPathway" id="UPA00251">
    <property type="reaction ID" value="UER00322"/>
</dbReference>
<dbReference type="Proteomes" id="UP000002712">
    <property type="component" value="Chromosome"/>
</dbReference>
<dbReference type="GO" id="GO:0005737">
    <property type="term" value="C:cytoplasm"/>
    <property type="evidence" value="ECO:0007669"/>
    <property type="project" value="UniProtKB-SubCell"/>
</dbReference>
<dbReference type="GO" id="GO:0004109">
    <property type="term" value="F:coproporphyrinogen oxidase activity"/>
    <property type="evidence" value="ECO:0007669"/>
    <property type="project" value="UniProtKB-UniRule"/>
</dbReference>
<dbReference type="GO" id="GO:0046872">
    <property type="term" value="F:metal ion binding"/>
    <property type="evidence" value="ECO:0007669"/>
    <property type="project" value="UniProtKB-KW"/>
</dbReference>
<dbReference type="GO" id="GO:0042803">
    <property type="term" value="F:protein homodimerization activity"/>
    <property type="evidence" value="ECO:0000250"/>
    <property type="project" value="UniProtKB"/>
</dbReference>
<dbReference type="GO" id="GO:0015995">
    <property type="term" value="P:chlorophyll biosynthetic process"/>
    <property type="evidence" value="ECO:0007669"/>
    <property type="project" value="UniProtKB-UniRule"/>
</dbReference>
<dbReference type="GO" id="GO:0006782">
    <property type="term" value="P:protoporphyrinogen IX biosynthetic process"/>
    <property type="evidence" value="ECO:0007669"/>
    <property type="project" value="UniProtKB-UniRule"/>
</dbReference>
<dbReference type="FunFam" id="3.40.1500.10:FF:000007">
    <property type="entry name" value="Oxygen-dependent coproporphyrinogen-III oxidase"/>
    <property type="match status" value="1"/>
</dbReference>
<dbReference type="Gene3D" id="3.40.1500.10">
    <property type="entry name" value="Coproporphyrinogen III oxidase, aerobic"/>
    <property type="match status" value="1"/>
</dbReference>
<dbReference type="HAMAP" id="MF_00333">
    <property type="entry name" value="Coprogen_oxidas"/>
    <property type="match status" value="1"/>
</dbReference>
<dbReference type="InterPro" id="IPR001260">
    <property type="entry name" value="Coprogen_oxidase_aer"/>
</dbReference>
<dbReference type="InterPro" id="IPR036406">
    <property type="entry name" value="Coprogen_oxidase_aer_sf"/>
</dbReference>
<dbReference type="InterPro" id="IPR018375">
    <property type="entry name" value="Coprogen_oxidase_CS"/>
</dbReference>
<dbReference type="NCBIfam" id="NF003727">
    <property type="entry name" value="PRK05330.1"/>
    <property type="match status" value="1"/>
</dbReference>
<dbReference type="PANTHER" id="PTHR10755">
    <property type="entry name" value="COPROPORPHYRINOGEN III OXIDASE, MITOCHONDRIAL"/>
    <property type="match status" value="1"/>
</dbReference>
<dbReference type="PANTHER" id="PTHR10755:SF0">
    <property type="entry name" value="OXYGEN-DEPENDENT COPROPORPHYRINOGEN-III OXIDASE, MITOCHONDRIAL"/>
    <property type="match status" value="1"/>
</dbReference>
<dbReference type="Pfam" id="PF01218">
    <property type="entry name" value="Coprogen_oxidas"/>
    <property type="match status" value="1"/>
</dbReference>
<dbReference type="PIRSF" id="PIRSF000166">
    <property type="entry name" value="Coproporphyri_ox"/>
    <property type="match status" value="1"/>
</dbReference>
<dbReference type="PRINTS" id="PR00073">
    <property type="entry name" value="COPRGNOXDASE"/>
</dbReference>
<dbReference type="SUPFAM" id="SSF102886">
    <property type="entry name" value="Coproporphyrinogen III oxidase"/>
    <property type="match status" value="1"/>
</dbReference>
<dbReference type="PROSITE" id="PS01021">
    <property type="entry name" value="COPROGEN_OXIDASE"/>
    <property type="match status" value="1"/>
</dbReference>
<accession>Q3AWA8</accession>
<name>HEM6_SYNS9</name>
<keyword id="KW-0149">Chlorophyll biosynthesis</keyword>
<keyword id="KW-0963">Cytoplasm</keyword>
<keyword id="KW-0350">Heme biosynthesis</keyword>
<keyword id="KW-0479">Metal-binding</keyword>
<keyword id="KW-0560">Oxidoreductase</keyword>
<keyword id="KW-0627">Porphyrin biosynthesis</keyword>
<keyword id="KW-1185">Reference proteome</keyword>
<evidence type="ECO:0000255" key="1">
    <source>
        <dbReference type="HAMAP-Rule" id="MF_00333"/>
    </source>
</evidence>
<evidence type="ECO:0000256" key="2">
    <source>
        <dbReference type="SAM" id="MobiDB-lite"/>
    </source>
</evidence>
<reference key="1">
    <citation type="submission" date="2005-08" db="EMBL/GenBank/DDBJ databases">
        <title>Complete sequence of Synechococcus sp. CC9902.</title>
        <authorList>
            <person name="Copeland A."/>
            <person name="Lucas S."/>
            <person name="Lapidus A."/>
            <person name="Barry K."/>
            <person name="Detter J.C."/>
            <person name="Glavina T."/>
            <person name="Hammon N."/>
            <person name="Israni S."/>
            <person name="Pitluck S."/>
            <person name="Martinez M."/>
            <person name="Schmutz J."/>
            <person name="Larimer F."/>
            <person name="Land M."/>
            <person name="Kyrpides N."/>
            <person name="Ivanova N."/>
            <person name="Richardson P."/>
        </authorList>
    </citation>
    <scope>NUCLEOTIDE SEQUENCE [LARGE SCALE GENOMIC DNA]</scope>
    <source>
        <strain>CC9902</strain>
    </source>
</reference>
<feature type="chain" id="PRO_1000019510" description="Oxygen-dependent coproporphyrinogen-III oxidase">
    <location>
        <begin position="1"/>
        <end position="362"/>
    </location>
</feature>
<feature type="region of interest" description="Disordered" evidence="2">
    <location>
        <begin position="12"/>
        <end position="31"/>
    </location>
</feature>
<feature type="region of interest" description="Important for dimerization" evidence="1">
    <location>
        <begin position="286"/>
        <end position="321"/>
    </location>
</feature>
<feature type="active site" description="Proton donor" evidence="1">
    <location>
        <position position="132"/>
    </location>
</feature>
<feature type="binding site" evidence="1">
    <location>
        <position position="118"/>
    </location>
    <ligand>
        <name>substrate</name>
    </ligand>
</feature>
<feature type="binding site" evidence="1">
    <location>
        <position position="122"/>
    </location>
    <ligand>
        <name>a divalent metal cation</name>
        <dbReference type="ChEBI" id="CHEBI:60240"/>
    </ligand>
</feature>
<feature type="binding site" evidence="1">
    <location>
        <position position="132"/>
    </location>
    <ligand>
        <name>a divalent metal cation</name>
        <dbReference type="ChEBI" id="CHEBI:60240"/>
    </ligand>
</feature>
<feature type="binding site" evidence="1">
    <location>
        <begin position="134"/>
        <end position="136"/>
    </location>
    <ligand>
        <name>substrate</name>
    </ligand>
</feature>
<feature type="binding site" evidence="1">
    <location>
        <position position="166"/>
    </location>
    <ligand>
        <name>a divalent metal cation</name>
        <dbReference type="ChEBI" id="CHEBI:60240"/>
    </ligand>
</feature>
<feature type="binding site" evidence="1">
    <location>
        <position position="196"/>
    </location>
    <ligand>
        <name>a divalent metal cation</name>
        <dbReference type="ChEBI" id="CHEBI:60240"/>
    </ligand>
</feature>
<feature type="site" description="Important for dimerization" evidence="1">
    <location>
        <position position="196"/>
    </location>
</feature>
<protein>
    <recommendedName>
        <fullName evidence="1">Oxygen-dependent coproporphyrinogen-III oxidase</fullName>
        <shortName evidence="1">CPO</shortName>
        <shortName evidence="1">Coprogen oxidase</shortName>
        <shortName evidence="1">Coproporphyrinogenase</shortName>
        <ecNumber evidence="1">1.3.3.3</ecNumber>
    </recommendedName>
</protein>
<comment type="function">
    <text evidence="1">Involved in the heme and chlorophyll biosynthesis. Catalyzes the aerobic oxidative decarboxylation of propionate groups of rings A and B of coproporphyrinogen-III to yield the vinyl groups in protoporphyrinogen-IX.</text>
</comment>
<comment type="catalytic activity">
    <reaction evidence="1">
        <text>coproporphyrinogen III + O2 + 2 H(+) = protoporphyrinogen IX + 2 CO2 + 2 H2O</text>
        <dbReference type="Rhea" id="RHEA:18257"/>
        <dbReference type="ChEBI" id="CHEBI:15377"/>
        <dbReference type="ChEBI" id="CHEBI:15378"/>
        <dbReference type="ChEBI" id="CHEBI:15379"/>
        <dbReference type="ChEBI" id="CHEBI:16526"/>
        <dbReference type="ChEBI" id="CHEBI:57307"/>
        <dbReference type="ChEBI" id="CHEBI:57309"/>
        <dbReference type="EC" id="1.3.3.3"/>
    </reaction>
</comment>
<comment type="cofactor">
    <cofactor evidence="1">
        <name>a divalent metal cation</name>
        <dbReference type="ChEBI" id="CHEBI:60240"/>
    </cofactor>
</comment>
<comment type="pathway">
    <text evidence="1">Porphyrin-containing compound metabolism; protoporphyrin-IX biosynthesis; protoporphyrinogen-IX from coproporphyrinogen-III (O2 route): step 1/1.</text>
</comment>
<comment type="subunit">
    <text evidence="1">Homodimer.</text>
</comment>
<comment type="subcellular location">
    <subcellularLocation>
        <location evidence="1">Cytoplasm</location>
    </subcellularLocation>
</comment>
<comment type="similarity">
    <text evidence="1">Belongs to the aerobic coproporphyrinogen-III oxidase family.</text>
</comment>
<organism>
    <name type="scientific">Synechococcus sp. (strain CC9902)</name>
    <dbReference type="NCBI Taxonomy" id="316279"/>
    <lineage>
        <taxon>Bacteria</taxon>
        <taxon>Bacillati</taxon>
        <taxon>Cyanobacteriota</taxon>
        <taxon>Cyanophyceae</taxon>
        <taxon>Synechococcales</taxon>
        <taxon>Synechococcaceae</taxon>
        <taxon>Synechococcus</taxon>
    </lineage>
</organism>
<gene>
    <name evidence="1" type="primary">hemF</name>
    <name type="ordered locus">Syncc9902_1926</name>
</gene>